<proteinExistence type="inferred from homology"/>
<feature type="chain" id="PRO_0000182106" description="UDP-N-acetylmuramate--L-alanine ligase">
    <location>
        <begin position="1"/>
        <end position="443"/>
    </location>
</feature>
<feature type="binding site" evidence="1">
    <location>
        <begin position="110"/>
        <end position="116"/>
    </location>
    <ligand>
        <name>ATP</name>
        <dbReference type="ChEBI" id="CHEBI:30616"/>
    </ligand>
</feature>
<protein>
    <recommendedName>
        <fullName evidence="1">UDP-N-acetylmuramate--L-alanine ligase</fullName>
        <ecNumber evidence="1">6.3.2.8</ecNumber>
    </recommendedName>
    <alternativeName>
        <fullName evidence="1">UDP-N-acetylmuramoyl-L-alanine synthetase</fullName>
    </alternativeName>
</protein>
<sequence length="443" mass="50050">MEKTYHFTGIKGSGMSALALMLHQMGKKVQGSDSTDYFFTQRGLEQADVPLLPFDEKNIKPEFELIAGNAFRDDNNVEIAFAHKNGFPFKRYHEFLGHFMEDFTSIGVAGAHGKTSTTGMLAHVMSNIVDTSYLIGDGTGRGIEGSEYFVFESDEYERHFMPYHPEYTIMTNIDFDHPDYFEGIEDVTSAFQDYANNIKKGIFAYGEDVNLRKLTAKAPIYYYGFEANDDYRAENLVRSTRGSSFDAYFRGEKIGHFVVPAYGKHNVLNALSVVAVCHNLGLDMTEVADHLLTFRGVKRRFTEKKVGETVIIDDFAHHPTEIEATLDAARQKYPDREIVAVFQPHTFTRTIAFADEFAEVLDHADTVYLAQIYGSAREVDHHEITAQDLADKVRKPAKVIDLDNVSPLLDHDRGVYVFMGAGNIQKYELAFEKLLSQVSTNLQ</sequence>
<gene>
    <name evidence="1" type="primary">murC</name>
    <name type="ordered locus">LL2040</name>
    <name type="ORF">L101678</name>
</gene>
<keyword id="KW-0067">ATP-binding</keyword>
<keyword id="KW-0131">Cell cycle</keyword>
<keyword id="KW-0132">Cell division</keyword>
<keyword id="KW-0133">Cell shape</keyword>
<keyword id="KW-0961">Cell wall biogenesis/degradation</keyword>
<keyword id="KW-0963">Cytoplasm</keyword>
<keyword id="KW-0436">Ligase</keyword>
<keyword id="KW-0547">Nucleotide-binding</keyword>
<keyword id="KW-0573">Peptidoglycan synthesis</keyword>
<keyword id="KW-1185">Reference proteome</keyword>
<reference key="1">
    <citation type="journal article" date="2001" name="Genome Res.">
        <title>The complete genome sequence of the lactic acid bacterium Lactococcus lactis ssp. lactis IL1403.</title>
        <authorList>
            <person name="Bolotin A."/>
            <person name="Wincker P."/>
            <person name="Mauger S."/>
            <person name="Jaillon O."/>
            <person name="Malarme K."/>
            <person name="Weissenbach J."/>
            <person name="Ehrlich S.D."/>
            <person name="Sorokin A."/>
        </authorList>
    </citation>
    <scope>NUCLEOTIDE SEQUENCE [LARGE SCALE GENOMIC DNA]</scope>
    <source>
        <strain>IL1403</strain>
    </source>
</reference>
<organism>
    <name type="scientific">Lactococcus lactis subsp. lactis (strain IL1403)</name>
    <name type="common">Streptococcus lactis</name>
    <dbReference type="NCBI Taxonomy" id="272623"/>
    <lineage>
        <taxon>Bacteria</taxon>
        <taxon>Bacillati</taxon>
        <taxon>Bacillota</taxon>
        <taxon>Bacilli</taxon>
        <taxon>Lactobacillales</taxon>
        <taxon>Streptococcaceae</taxon>
        <taxon>Lactococcus</taxon>
    </lineage>
</organism>
<comment type="function">
    <text evidence="1">Cell wall formation.</text>
</comment>
<comment type="catalytic activity">
    <reaction evidence="1">
        <text>UDP-N-acetyl-alpha-D-muramate + L-alanine + ATP = UDP-N-acetyl-alpha-D-muramoyl-L-alanine + ADP + phosphate + H(+)</text>
        <dbReference type="Rhea" id="RHEA:23372"/>
        <dbReference type="ChEBI" id="CHEBI:15378"/>
        <dbReference type="ChEBI" id="CHEBI:30616"/>
        <dbReference type="ChEBI" id="CHEBI:43474"/>
        <dbReference type="ChEBI" id="CHEBI:57972"/>
        <dbReference type="ChEBI" id="CHEBI:70757"/>
        <dbReference type="ChEBI" id="CHEBI:83898"/>
        <dbReference type="ChEBI" id="CHEBI:456216"/>
        <dbReference type="EC" id="6.3.2.8"/>
    </reaction>
</comment>
<comment type="pathway">
    <text evidence="1">Cell wall biogenesis; peptidoglycan biosynthesis.</text>
</comment>
<comment type="subcellular location">
    <subcellularLocation>
        <location evidence="1">Cytoplasm</location>
    </subcellularLocation>
</comment>
<comment type="similarity">
    <text evidence="1">Belongs to the MurCDEF family.</text>
</comment>
<comment type="sequence caution" evidence="2">
    <conflict type="erroneous initiation">
        <sequence resource="EMBL-CDS" id="AAK06138"/>
    </conflict>
</comment>
<dbReference type="EC" id="6.3.2.8" evidence="1"/>
<dbReference type="EMBL" id="AE005176">
    <property type="protein sequence ID" value="AAK06138.1"/>
    <property type="status" value="ALT_INIT"/>
    <property type="molecule type" value="Genomic_DNA"/>
</dbReference>
<dbReference type="PIR" id="H86879">
    <property type="entry name" value="H86879"/>
</dbReference>
<dbReference type="RefSeq" id="NP_268197.2">
    <property type="nucleotide sequence ID" value="NC_002662.1"/>
</dbReference>
<dbReference type="RefSeq" id="WP_010906280.1">
    <property type="nucleotide sequence ID" value="NC_002662.1"/>
</dbReference>
<dbReference type="SMR" id="Q9CE10"/>
<dbReference type="PaxDb" id="272623-L101678"/>
<dbReference type="EnsemblBacteria" id="AAK06138">
    <property type="protein sequence ID" value="AAK06138"/>
    <property type="gene ID" value="L101678"/>
</dbReference>
<dbReference type="KEGG" id="lla:L101678"/>
<dbReference type="PATRIC" id="fig|272623.7.peg.2197"/>
<dbReference type="eggNOG" id="COG0773">
    <property type="taxonomic scope" value="Bacteria"/>
</dbReference>
<dbReference type="HOGENOM" id="CLU_028104_1_0_9"/>
<dbReference type="OrthoDB" id="9804126at2"/>
<dbReference type="UniPathway" id="UPA00219"/>
<dbReference type="Proteomes" id="UP000002196">
    <property type="component" value="Chromosome"/>
</dbReference>
<dbReference type="GO" id="GO:0005737">
    <property type="term" value="C:cytoplasm"/>
    <property type="evidence" value="ECO:0007669"/>
    <property type="project" value="UniProtKB-SubCell"/>
</dbReference>
<dbReference type="GO" id="GO:0005524">
    <property type="term" value="F:ATP binding"/>
    <property type="evidence" value="ECO:0007669"/>
    <property type="project" value="UniProtKB-UniRule"/>
</dbReference>
<dbReference type="GO" id="GO:0008763">
    <property type="term" value="F:UDP-N-acetylmuramate-L-alanine ligase activity"/>
    <property type="evidence" value="ECO:0007669"/>
    <property type="project" value="UniProtKB-UniRule"/>
</dbReference>
<dbReference type="GO" id="GO:0051301">
    <property type="term" value="P:cell division"/>
    <property type="evidence" value="ECO:0007669"/>
    <property type="project" value="UniProtKB-KW"/>
</dbReference>
<dbReference type="GO" id="GO:0071555">
    <property type="term" value="P:cell wall organization"/>
    <property type="evidence" value="ECO:0007669"/>
    <property type="project" value="UniProtKB-KW"/>
</dbReference>
<dbReference type="GO" id="GO:0009252">
    <property type="term" value="P:peptidoglycan biosynthetic process"/>
    <property type="evidence" value="ECO:0007669"/>
    <property type="project" value="UniProtKB-UniRule"/>
</dbReference>
<dbReference type="GO" id="GO:0008360">
    <property type="term" value="P:regulation of cell shape"/>
    <property type="evidence" value="ECO:0007669"/>
    <property type="project" value="UniProtKB-KW"/>
</dbReference>
<dbReference type="Gene3D" id="3.90.190.20">
    <property type="entry name" value="Mur ligase, C-terminal domain"/>
    <property type="match status" value="1"/>
</dbReference>
<dbReference type="Gene3D" id="3.40.1190.10">
    <property type="entry name" value="Mur-like, catalytic domain"/>
    <property type="match status" value="1"/>
</dbReference>
<dbReference type="Gene3D" id="3.40.50.720">
    <property type="entry name" value="NAD(P)-binding Rossmann-like Domain"/>
    <property type="match status" value="1"/>
</dbReference>
<dbReference type="HAMAP" id="MF_00046">
    <property type="entry name" value="MurC"/>
    <property type="match status" value="1"/>
</dbReference>
<dbReference type="InterPro" id="IPR036565">
    <property type="entry name" value="Mur-like_cat_sf"/>
</dbReference>
<dbReference type="InterPro" id="IPR004101">
    <property type="entry name" value="Mur_ligase_C"/>
</dbReference>
<dbReference type="InterPro" id="IPR036615">
    <property type="entry name" value="Mur_ligase_C_dom_sf"/>
</dbReference>
<dbReference type="InterPro" id="IPR013221">
    <property type="entry name" value="Mur_ligase_cen"/>
</dbReference>
<dbReference type="InterPro" id="IPR000713">
    <property type="entry name" value="Mur_ligase_N"/>
</dbReference>
<dbReference type="InterPro" id="IPR050061">
    <property type="entry name" value="MurCDEF_pg_biosynth"/>
</dbReference>
<dbReference type="InterPro" id="IPR005758">
    <property type="entry name" value="UDP-N-AcMur_Ala_ligase_MurC"/>
</dbReference>
<dbReference type="NCBIfam" id="TIGR01082">
    <property type="entry name" value="murC"/>
    <property type="match status" value="1"/>
</dbReference>
<dbReference type="PANTHER" id="PTHR43445:SF3">
    <property type="entry name" value="UDP-N-ACETYLMURAMATE--L-ALANINE LIGASE"/>
    <property type="match status" value="1"/>
</dbReference>
<dbReference type="PANTHER" id="PTHR43445">
    <property type="entry name" value="UDP-N-ACETYLMURAMATE--L-ALANINE LIGASE-RELATED"/>
    <property type="match status" value="1"/>
</dbReference>
<dbReference type="Pfam" id="PF01225">
    <property type="entry name" value="Mur_ligase"/>
    <property type="match status" value="1"/>
</dbReference>
<dbReference type="Pfam" id="PF02875">
    <property type="entry name" value="Mur_ligase_C"/>
    <property type="match status" value="1"/>
</dbReference>
<dbReference type="Pfam" id="PF08245">
    <property type="entry name" value="Mur_ligase_M"/>
    <property type="match status" value="1"/>
</dbReference>
<dbReference type="SUPFAM" id="SSF51984">
    <property type="entry name" value="MurCD N-terminal domain"/>
    <property type="match status" value="1"/>
</dbReference>
<dbReference type="SUPFAM" id="SSF53623">
    <property type="entry name" value="MurD-like peptide ligases, catalytic domain"/>
    <property type="match status" value="1"/>
</dbReference>
<dbReference type="SUPFAM" id="SSF53244">
    <property type="entry name" value="MurD-like peptide ligases, peptide-binding domain"/>
    <property type="match status" value="1"/>
</dbReference>
<evidence type="ECO:0000255" key="1">
    <source>
        <dbReference type="HAMAP-Rule" id="MF_00046"/>
    </source>
</evidence>
<evidence type="ECO:0000305" key="2"/>
<accession>Q9CE10</accession>
<name>MURC_LACLA</name>